<name>PSD2_ARATH</name>
<evidence type="ECO:0000255" key="1">
    <source>
        <dbReference type="HAMAP-Rule" id="MF_03209"/>
    </source>
</evidence>
<evidence type="ECO:0000255" key="2">
    <source>
        <dbReference type="PROSITE-ProRule" id="PRU00041"/>
    </source>
</evidence>
<evidence type="ECO:0000269" key="3">
    <source>
    </source>
</evidence>
<evidence type="ECO:0000305" key="4"/>
<evidence type="ECO:0000305" key="5">
    <source>
    </source>
</evidence>
<comment type="function">
    <text evidence="1 3">Catalyzes the formation of phosphatidylethanolamine (PtdEtn) from phosphatidylserine (PtdSer). Plays a central role in phospholipid metabolism and in the interorganelle trafficking of phosphatidylserine. Contributes only to a minor proportion of PtdEtn production.</text>
</comment>
<comment type="catalytic activity">
    <reaction evidence="1">
        <text>a 1,2-diacyl-sn-glycero-3-phospho-L-serine + H(+) = a 1,2-diacyl-sn-glycero-3-phosphoethanolamine + CO2</text>
        <dbReference type="Rhea" id="RHEA:20828"/>
        <dbReference type="ChEBI" id="CHEBI:15378"/>
        <dbReference type="ChEBI" id="CHEBI:16526"/>
        <dbReference type="ChEBI" id="CHEBI:57262"/>
        <dbReference type="ChEBI" id="CHEBI:64612"/>
        <dbReference type="EC" id="4.1.1.65"/>
    </reaction>
</comment>
<comment type="cofactor">
    <cofactor evidence="1">
        <name>pyruvate</name>
        <dbReference type="ChEBI" id="CHEBI:15361"/>
    </cofactor>
    <text evidence="1">Binds 1 pyruvoyl group covalently per subunit.</text>
</comment>
<comment type="pathway">
    <text evidence="1">Phospholipid metabolism; phosphatidylethanolamine biosynthesis; phosphatidylethanolamine from CDP-diacylglycerol: step 2/2.</text>
</comment>
<comment type="subunit">
    <text evidence="1">Heterodimer of a large membrane-associated beta subunit and a small pyruvoyl-containing alpha subunit.</text>
</comment>
<comment type="subcellular location">
    <subcellularLocation>
        <location evidence="5">Vacuole membrane</location>
        <topology evidence="5">Peripheral membrane protein</topology>
    </subcellularLocation>
    <text>Tonoplast.</text>
</comment>
<comment type="tissue specificity">
    <text evidence="3">Highly expressed in flowers and at lower levels in leaves.</text>
</comment>
<comment type="domain">
    <text evidence="1">The C2 domains have an essential, but non-catalytic function. They may facilitate interactions with other proteins and are required for lipid transport function.</text>
</comment>
<comment type="PTM">
    <text evidence="1">Is synthesized initially as an inactive proenzyme. Formation of the active enzyme involves a self-maturation process in which the active site pyruvoyl group is generated from an internal serine residue via an autocatalytic post-translational modification. Two non-identical subunits are generated from the proenzyme in this reaction, and the pyruvate is formed at the N-terminus of the alpha chain, which is derived from the carboxyl end of the proenzyme. The autoendoproteolytic cleavage occurs by a canonical serine protease mechanism, in which the side chain hydroxyl group of the serine supplies its oxygen atom to form the C-terminus of the beta chain, while the remainder of the serine residue undergoes an oxidative deamination to produce ammonia and the pyruvoyl prosthetic group on the alpha chain. During this reaction, the Ser that is part of the protease active site of the proenzyme becomes the pyruvoyl prosthetic group, which constitutes an essential element of the active site of the mature decarboxylase.</text>
</comment>
<comment type="disruption phenotype">
    <text evidence="3">No visible phenotype under normal growth conditions.</text>
</comment>
<comment type="similarity">
    <text evidence="1">Belongs to the phosphatidylserine decarboxylase family. PSD-B subfamily. Eukaryotic type II sub-subfamily.</text>
</comment>
<comment type="sequence caution" evidence="4">
    <conflict type="erroneous initiation">
        <sequence resource="EMBL-CDS" id="ABO26298"/>
    </conflict>
    <text>Extended N-terminus.</text>
</comment>
<comment type="sequence caution" evidence="4">
    <conflict type="erroneous gene model prediction">
        <sequence resource="EMBL-CDS" id="BAA97369"/>
    </conflict>
</comment>
<organism>
    <name type="scientific">Arabidopsis thaliana</name>
    <name type="common">Mouse-ear cress</name>
    <dbReference type="NCBI Taxonomy" id="3702"/>
    <lineage>
        <taxon>Eukaryota</taxon>
        <taxon>Viridiplantae</taxon>
        <taxon>Streptophyta</taxon>
        <taxon>Embryophyta</taxon>
        <taxon>Tracheophyta</taxon>
        <taxon>Spermatophyta</taxon>
        <taxon>Magnoliopsida</taxon>
        <taxon>eudicotyledons</taxon>
        <taxon>Gunneridae</taxon>
        <taxon>Pentapetalae</taxon>
        <taxon>rosids</taxon>
        <taxon>malvids</taxon>
        <taxon>Brassicales</taxon>
        <taxon>Brassicaceae</taxon>
        <taxon>Camelineae</taxon>
        <taxon>Arabidopsis</taxon>
    </lineage>
</organism>
<reference key="1">
    <citation type="journal article" date="2007" name="Plant Physiol.">
        <title>Deficiency in phosphatidylserine decarboxylase activity in the psd1 psd2 psd3 triple mutant of Arabidopsis affects phosphatidylethanolamine accumulation in mitochondria.</title>
        <authorList>
            <person name="Nerlich A."/>
            <person name="von Orlow M."/>
            <person name="Rontein D."/>
            <person name="Hanson A.D."/>
            <person name="Dormann P."/>
        </authorList>
    </citation>
    <scope>NUCLEOTIDE SEQUENCE [MRNA]</scope>
    <scope>FUNCTION</scope>
    <scope>SUBCELLULAR LOCATION</scope>
    <scope>TISSUE SPECIFICITY</scope>
    <scope>DISRUPTION PHENOTYPE</scope>
</reference>
<reference key="2">
    <citation type="journal article" date="2000" name="DNA Res.">
        <title>Structural analysis of Arabidopsis thaliana chromosome 5. X. Sequence features of the regions of 3,076,755 bp covered by sixty P1 and TAC clones.</title>
        <authorList>
            <person name="Sato S."/>
            <person name="Nakamura Y."/>
            <person name="Kaneko T."/>
            <person name="Katoh T."/>
            <person name="Asamizu E."/>
            <person name="Kotani H."/>
            <person name="Tabata S."/>
        </authorList>
    </citation>
    <scope>NUCLEOTIDE SEQUENCE [LARGE SCALE GENOMIC DNA]</scope>
    <source>
        <strain>cv. Columbia</strain>
    </source>
</reference>
<reference key="3">
    <citation type="journal article" date="2017" name="Plant J.">
        <title>Araport11: a complete reannotation of the Arabidopsis thaliana reference genome.</title>
        <authorList>
            <person name="Cheng C.Y."/>
            <person name="Krishnakumar V."/>
            <person name="Chan A.P."/>
            <person name="Thibaud-Nissen F."/>
            <person name="Schobel S."/>
            <person name="Town C.D."/>
        </authorList>
    </citation>
    <scope>GENOME REANNOTATION</scope>
    <source>
        <strain>cv. Columbia</strain>
    </source>
</reference>
<proteinExistence type="evidence at transcript level"/>
<keyword id="KW-0106">Calcium</keyword>
<keyword id="KW-0210">Decarboxylase</keyword>
<keyword id="KW-0444">Lipid biosynthesis</keyword>
<keyword id="KW-0443">Lipid metabolism</keyword>
<keyword id="KW-0456">Lyase</keyword>
<keyword id="KW-0472">Membrane</keyword>
<keyword id="KW-0479">Metal-binding</keyword>
<keyword id="KW-0594">Phospholipid biosynthesis</keyword>
<keyword id="KW-1208">Phospholipid metabolism</keyword>
<keyword id="KW-0670">Pyruvate</keyword>
<keyword id="KW-1185">Reference proteome</keyword>
<keyword id="KW-0677">Repeat</keyword>
<keyword id="KW-0926">Vacuole</keyword>
<keyword id="KW-0865">Zymogen</keyword>
<sequence length="635" mass="71000">MGNGNSREAKESRRSRLRHKLQKFRIHRRHLRSSRNSAGMVIQRTVSAEDFSGIALLTLIGAEMKFKDKWLACVSFGEQTFRTEISDTTQKPIWNSEKKLLLEKNGPSLARVSVFETNRVARNKIIGYCELDIFDFVVQEPESTCKSFNLLDPTSSNVVGSIFLSCAIEDPVETERRFAKRILSIVDYNEDGQLSFSEFSDLIKAFGNLVAANKKEELFKAADLNGDGVVTIDELAALLALQQEQEPIINNCPVCGEALQVSDKLNAMIHMTLCFDEGTGNQVMTGGFLTDRQASYGWMFKLSEWTHLSTYDVGLNTGSSASYIVVIDRKSKRLVEELIDSKIVLSMRAIYQSKIGLRLMDQGAKEILQRLSEKQGKKMSSVESAQKIPRFLEFFKDQINMAEVKYPLQHFKTFNEFFIRELKPGARPIACMNRNDVAVCAADCRLMAFQSVEDSTRFWIKGKKFSIRGLLGKNVNPNAFLDGSLVIFRLAPQDYHRFHVPVSGVIEQFVDVSGSLYTVNPIAVNSKYCNVFTENKRTVAIISTAEFGKVAFVAIGATMVGSINFVRKEGEHVKKGDELGYFSFGGSTVICVFEKDAIGIDNDLLVNSGRSLETLVSVGMQLGVSTRTFARSTLI</sequence>
<dbReference type="EC" id="4.1.1.65" evidence="1"/>
<dbReference type="EMBL" id="EF203902">
    <property type="protein sequence ID" value="ABO26298.1"/>
    <property type="status" value="ALT_INIT"/>
    <property type="molecule type" value="mRNA"/>
</dbReference>
<dbReference type="EMBL" id="AB023042">
    <property type="protein sequence ID" value="BAA97369.1"/>
    <property type="status" value="ALT_SEQ"/>
    <property type="molecule type" value="Genomic_DNA"/>
</dbReference>
<dbReference type="EMBL" id="CP002688">
    <property type="protein sequence ID" value="AED96864.1"/>
    <property type="molecule type" value="Genomic_DNA"/>
</dbReference>
<dbReference type="RefSeq" id="NP_200529.4">
    <property type="nucleotide sequence ID" value="NM_125101.5"/>
</dbReference>
<dbReference type="SMR" id="F4KAK5"/>
<dbReference type="STRING" id="3702.F4KAK5"/>
<dbReference type="iPTMnet" id="F4KAK5"/>
<dbReference type="PaxDb" id="3702-AT5G57190.1"/>
<dbReference type="ProteomicsDB" id="226061"/>
<dbReference type="EnsemblPlants" id="AT5G57190.1">
    <property type="protein sequence ID" value="AT5G57190.1"/>
    <property type="gene ID" value="AT5G57190"/>
</dbReference>
<dbReference type="GeneID" id="835825"/>
<dbReference type="Gramene" id="AT5G57190.1">
    <property type="protein sequence ID" value="AT5G57190.1"/>
    <property type="gene ID" value="AT5G57190"/>
</dbReference>
<dbReference type="KEGG" id="ath:AT5G57190"/>
<dbReference type="Araport" id="AT5G57190"/>
<dbReference type="TAIR" id="AT5G57190">
    <property type="gene designation" value="PSD2"/>
</dbReference>
<dbReference type="eggNOG" id="KOG2419">
    <property type="taxonomic scope" value="Eukaryota"/>
</dbReference>
<dbReference type="HOGENOM" id="CLU_034900_0_0_1"/>
<dbReference type="InParanoid" id="F4KAK5"/>
<dbReference type="BioCyc" id="ARA:AT5G57190-MONOMER"/>
<dbReference type="BioCyc" id="MetaCyc:AT5G57190-MONOMER"/>
<dbReference type="BRENDA" id="4.1.1.65">
    <property type="organism ID" value="399"/>
</dbReference>
<dbReference type="UniPathway" id="UPA00558">
    <property type="reaction ID" value="UER00616"/>
</dbReference>
<dbReference type="PRO" id="PR:F4KAK5"/>
<dbReference type="Proteomes" id="UP000006548">
    <property type="component" value="Chromosome 5"/>
</dbReference>
<dbReference type="ExpressionAtlas" id="F4KAK5">
    <property type="expression patterns" value="baseline and differential"/>
</dbReference>
<dbReference type="GO" id="GO:0009705">
    <property type="term" value="C:plant-type vacuole membrane"/>
    <property type="evidence" value="ECO:0000314"/>
    <property type="project" value="TAIR"/>
</dbReference>
<dbReference type="GO" id="GO:0005509">
    <property type="term" value="F:calcium ion binding"/>
    <property type="evidence" value="ECO:0007669"/>
    <property type="project" value="InterPro"/>
</dbReference>
<dbReference type="GO" id="GO:0004609">
    <property type="term" value="F:phosphatidylserine decarboxylase activity"/>
    <property type="evidence" value="ECO:0000314"/>
    <property type="project" value="TAIR"/>
</dbReference>
<dbReference type="GO" id="GO:0006646">
    <property type="term" value="P:phosphatidylethanolamine biosynthetic process"/>
    <property type="evidence" value="ECO:0007669"/>
    <property type="project" value="UniProtKB-UniRule"/>
</dbReference>
<dbReference type="GO" id="GO:0016540">
    <property type="term" value="P:protein autoprocessing"/>
    <property type="evidence" value="ECO:0007669"/>
    <property type="project" value="UniProtKB-UniRule"/>
</dbReference>
<dbReference type="CDD" id="cd00030">
    <property type="entry name" value="C2"/>
    <property type="match status" value="1"/>
</dbReference>
<dbReference type="CDD" id="cd00051">
    <property type="entry name" value="EFh"/>
    <property type="match status" value="1"/>
</dbReference>
<dbReference type="FunFam" id="1.10.238.10:FF:000200">
    <property type="entry name" value="Phosphatidylserine decarboxylase proenzyme 2"/>
    <property type="match status" value="1"/>
</dbReference>
<dbReference type="FunFam" id="2.60.40.150:FF:000194">
    <property type="entry name" value="Phosphatidylserine decarboxylase proenzyme 2"/>
    <property type="match status" value="1"/>
</dbReference>
<dbReference type="Gene3D" id="2.60.40.150">
    <property type="entry name" value="C2 domain"/>
    <property type="match status" value="1"/>
</dbReference>
<dbReference type="Gene3D" id="1.10.238.10">
    <property type="entry name" value="EF-hand"/>
    <property type="match status" value="1"/>
</dbReference>
<dbReference type="HAMAP" id="MF_00663">
    <property type="entry name" value="PS_decarb_PSD_B_type2"/>
    <property type="match status" value="1"/>
</dbReference>
<dbReference type="InterPro" id="IPR000008">
    <property type="entry name" value="C2_dom"/>
</dbReference>
<dbReference type="InterPro" id="IPR035892">
    <property type="entry name" value="C2_domain_sf"/>
</dbReference>
<dbReference type="InterPro" id="IPR011992">
    <property type="entry name" value="EF-hand-dom_pair"/>
</dbReference>
<dbReference type="InterPro" id="IPR018247">
    <property type="entry name" value="EF_Hand_1_Ca_BS"/>
</dbReference>
<dbReference type="InterPro" id="IPR002048">
    <property type="entry name" value="EF_hand_dom"/>
</dbReference>
<dbReference type="InterPro" id="IPR003817">
    <property type="entry name" value="PS_Dcarbxylase"/>
</dbReference>
<dbReference type="InterPro" id="IPR033177">
    <property type="entry name" value="PSD-B"/>
</dbReference>
<dbReference type="InterPro" id="IPR033179">
    <property type="entry name" value="PSD_type2_pro"/>
</dbReference>
<dbReference type="NCBIfam" id="TIGR00163">
    <property type="entry name" value="PS_decarb"/>
    <property type="match status" value="1"/>
</dbReference>
<dbReference type="PANTHER" id="PTHR10067">
    <property type="entry name" value="PHOSPHATIDYLSERINE DECARBOXYLASE"/>
    <property type="match status" value="1"/>
</dbReference>
<dbReference type="PANTHER" id="PTHR10067:SF16">
    <property type="entry name" value="PHOSPHATIDYLSERINE DECARBOXYLASE PROENZYME 2"/>
    <property type="match status" value="1"/>
</dbReference>
<dbReference type="Pfam" id="PF00168">
    <property type="entry name" value="C2"/>
    <property type="match status" value="1"/>
</dbReference>
<dbReference type="Pfam" id="PF13499">
    <property type="entry name" value="EF-hand_7"/>
    <property type="match status" value="1"/>
</dbReference>
<dbReference type="Pfam" id="PF02666">
    <property type="entry name" value="PS_Dcarbxylase"/>
    <property type="match status" value="1"/>
</dbReference>
<dbReference type="SMART" id="SM00054">
    <property type="entry name" value="EFh"/>
    <property type="match status" value="2"/>
</dbReference>
<dbReference type="SUPFAM" id="SSF49562">
    <property type="entry name" value="C2 domain (Calcium/lipid-binding domain, CaLB)"/>
    <property type="match status" value="1"/>
</dbReference>
<dbReference type="SUPFAM" id="SSF47473">
    <property type="entry name" value="EF-hand"/>
    <property type="match status" value="1"/>
</dbReference>
<dbReference type="PROSITE" id="PS50004">
    <property type="entry name" value="C2"/>
    <property type="match status" value="1"/>
</dbReference>
<dbReference type="PROSITE" id="PS00018">
    <property type="entry name" value="EF_HAND_1"/>
    <property type="match status" value="2"/>
</dbReference>
<dbReference type="PROSITE" id="PS50222">
    <property type="entry name" value="EF_HAND_2"/>
    <property type="match status" value="2"/>
</dbReference>
<accession>F4KAK5</accession>
<accession>A4GNA9</accession>
<accession>Q9LU67</accession>
<feature type="chain" id="PRO_0000429514" description="Phosphatidylserine decarboxylase proenzyme 2">
    <location>
        <begin position="1"/>
        <end position="635"/>
    </location>
</feature>
<feature type="chain" id="PRO_0000429515" description="Phosphatidylserine decarboxylase 2 beta chain" evidence="1">
    <location>
        <begin position="1"/>
        <end position="586"/>
    </location>
</feature>
<feature type="chain" id="PRO_0000429516" description="Phosphatidylserine decarboxylase 2 alpha chain" evidence="1">
    <location>
        <begin position="587"/>
        <end position="635"/>
    </location>
</feature>
<feature type="domain" description="C2" evidence="2">
    <location>
        <begin position="20"/>
        <end position="146"/>
    </location>
</feature>
<feature type="domain" description="EF-hand 1" evidence="1">
    <location>
        <begin position="174"/>
        <end position="209"/>
    </location>
</feature>
<feature type="domain" description="EF-hand 2" evidence="1">
    <location>
        <begin position="210"/>
        <end position="245"/>
    </location>
</feature>
<feature type="active site" description="Charge relay system; for autoendoproteolytic cleavage activity" evidence="1">
    <location>
        <position position="443"/>
    </location>
</feature>
<feature type="active site" description="Charge relay system; for autoendoproteolytic cleavage activity" evidence="1">
    <location>
        <position position="499"/>
    </location>
</feature>
<feature type="active site" description="Charge relay system; for autoendoproteolytic cleavage activity" evidence="1">
    <location>
        <position position="587"/>
    </location>
</feature>
<feature type="active site" description="Schiff-base intermediate with substrate; via pyruvic acid; for decarboxylase activity" evidence="1">
    <location>
        <position position="587"/>
    </location>
</feature>
<feature type="binding site" evidence="1">
    <location>
        <position position="187"/>
    </location>
    <ligand>
        <name>Ca(2+)</name>
        <dbReference type="ChEBI" id="CHEBI:29108"/>
        <label>1</label>
    </ligand>
</feature>
<feature type="binding site" evidence="1">
    <location>
        <position position="189"/>
    </location>
    <ligand>
        <name>Ca(2+)</name>
        <dbReference type="ChEBI" id="CHEBI:29108"/>
        <label>1</label>
    </ligand>
</feature>
<feature type="binding site" evidence="1">
    <location>
        <position position="191"/>
    </location>
    <ligand>
        <name>Ca(2+)</name>
        <dbReference type="ChEBI" id="CHEBI:29108"/>
        <label>1</label>
    </ligand>
</feature>
<feature type="binding site" evidence="1">
    <location>
        <position position="193"/>
    </location>
    <ligand>
        <name>Ca(2+)</name>
        <dbReference type="ChEBI" id="CHEBI:29108"/>
        <label>1</label>
    </ligand>
</feature>
<feature type="binding site" evidence="1">
    <location>
        <position position="198"/>
    </location>
    <ligand>
        <name>Ca(2+)</name>
        <dbReference type="ChEBI" id="CHEBI:29108"/>
        <label>1</label>
    </ligand>
</feature>
<feature type="binding site" evidence="1">
    <location>
        <position position="223"/>
    </location>
    <ligand>
        <name>Ca(2+)</name>
        <dbReference type="ChEBI" id="CHEBI:29108"/>
        <label>2</label>
    </ligand>
</feature>
<feature type="binding site" evidence="1">
    <location>
        <position position="225"/>
    </location>
    <ligand>
        <name>Ca(2+)</name>
        <dbReference type="ChEBI" id="CHEBI:29108"/>
        <label>2</label>
    </ligand>
</feature>
<feature type="binding site" evidence="1">
    <location>
        <position position="227"/>
    </location>
    <ligand>
        <name>Ca(2+)</name>
        <dbReference type="ChEBI" id="CHEBI:29108"/>
        <label>2</label>
    </ligand>
</feature>
<feature type="binding site" evidence="1">
    <location>
        <position position="234"/>
    </location>
    <ligand>
        <name>Ca(2+)</name>
        <dbReference type="ChEBI" id="CHEBI:29108"/>
        <label>2</label>
    </ligand>
</feature>
<feature type="site" description="Cleavage (non-hydrolytic); by autocatalysis" evidence="1">
    <location>
        <begin position="586"/>
        <end position="587"/>
    </location>
</feature>
<feature type="modified residue" description="Pyruvic acid (Ser); by autocatalysis" evidence="1">
    <location>
        <position position="587"/>
    </location>
</feature>
<feature type="sequence conflict" description="In Ref. 1; ABO26298." evidence="4" ref="1">
    <original>D</original>
    <variation>G</variation>
    <location>
        <position position="397"/>
    </location>
</feature>
<protein>
    <recommendedName>
        <fullName>Phosphatidylserine decarboxylase proenzyme 2</fullName>
        <ecNumber evidence="1">4.1.1.65</ecNumber>
    </recommendedName>
    <component>
        <recommendedName>
            <fullName>Phosphatidylserine decarboxylase 2 beta chain</fullName>
        </recommendedName>
    </component>
    <component>
        <recommendedName>
            <fullName>Phosphatidylserine decarboxylase 2 alpha chain</fullName>
        </recommendedName>
    </component>
</protein>
<gene>
    <name type="primary">PSD2</name>
    <name type="ordered locus">At5g57190</name>
    <name type="ORF">MUL3.14</name>
</gene>